<proteinExistence type="inferred from homology"/>
<keyword id="KW-0963">Cytoplasm</keyword>
<keyword id="KW-0489">Methyltransferase</keyword>
<keyword id="KW-1185">Reference proteome</keyword>
<keyword id="KW-0694">RNA-binding</keyword>
<keyword id="KW-0698">rRNA processing</keyword>
<keyword id="KW-0949">S-adenosyl-L-methionine</keyword>
<keyword id="KW-0808">Transferase</keyword>
<organism>
    <name type="scientific">Picosynechococcus sp. (strain ATCC 27264 / PCC 7002 / PR-6)</name>
    <name type="common">Agmenellum quadruplicatum</name>
    <dbReference type="NCBI Taxonomy" id="32049"/>
    <lineage>
        <taxon>Bacteria</taxon>
        <taxon>Bacillati</taxon>
        <taxon>Cyanobacteriota</taxon>
        <taxon>Cyanophyceae</taxon>
        <taxon>Oscillatoriophycideae</taxon>
        <taxon>Chroococcales</taxon>
        <taxon>Geminocystaceae</taxon>
        <taxon>Picosynechococcus</taxon>
    </lineage>
</organism>
<reference key="1">
    <citation type="submission" date="2008-02" db="EMBL/GenBank/DDBJ databases">
        <title>Complete sequence of Synechococcus sp. PCC 7002.</title>
        <authorList>
            <person name="Li T."/>
            <person name="Zhao J."/>
            <person name="Zhao C."/>
            <person name="Liu Z."/>
            <person name="Zhao F."/>
            <person name="Marquardt J."/>
            <person name="Nomura C.T."/>
            <person name="Persson S."/>
            <person name="Detter J.C."/>
            <person name="Richardson P.M."/>
            <person name="Lanz C."/>
            <person name="Schuster S.C."/>
            <person name="Wang J."/>
            <person name="Li S."/>
            <person name="Huang X."/>
            <person name="Cai T."/>
            <person name="Yu Z."/>
            <person name="Luo J."/>
            <person name="Zhao J."/>
            <person name="Bryant D.A."/>
        </authorList>
    </citation>
    <scope>NUCLEOTIDE SEQUENCE [LARGE SCALE GENOMIC DNA]</scope>
    <source>
        <strain>ATCC 27264 / PCC 7002 / PR-6</strain>
    </source>
</reference>
<dbReference type="EC" id="2.1.1.182" evidence="1"/>
<dbReference type="EMBL" id="CP000951">
    <property type="protein sequence ID" value="ACA98901.1"/>
    <property type="molecule type" value="Genomic_DNA"/>
</dbReference>
<dbReference type="SMR" id="B1XIV9"/>
<dbReference type="STRING" id="32049.SYNPCC7002_A0897"/>
<dbReference type="KEGG" id="syp:SYNPCC7002_A0897"/>
<dbReference type="eggNOG" id="COG0030">
    <property type="taxonomic scope" value="Bacteria"/>
</dbReference>
<dbReference type="HOGENOM" id="CLU_041220_0_1_3"/>
<dbReference type="Proteomes" id="UP000001688">
    <property type="component" value="Chromosome"/>
</dbReference>
<dbReference type="GO" id="GO:0005829">
    <property type="term" value="C:cytosol"/>
    <property type="evidence" value="ECO:0007669"/>
    <property type="project" value="TreeGrafter"/>
</dbReference>
<dbReference type="GO" id="GO:0052908">
    <property type="term" value="F:16S rRNA (adenine(1518)-N(6)/adenine(1519)-N(6))-dimethyltransferase activity"/>
    <property type="evidence" value="ECO:0007669"/>
    <property type="project" value="UniProtKB-EC"/>
</dbReference>
<dbReference type="GO" id="GO:0003723">
    <property type="term" value="F:RNA binding"/>
    <property type="evidence" value="ECO:0007669"/>
    <property type="project" value="UniProtKB-KW"/>
</dbReference>
<dbReference type="CDD" id="cd02440">
    <property type="entry name" value="AdoMet_MTases"/>
    <property type="match status" value="1"/>
</dbReference>
<dbReference type="FunFam" id="3.40.50.150:FF:000023">
    <property type="entry name" value="Ribosomal RNA small subunit methyltransferase A"/>
    <property type="match status" value="1"/>
</dbReference>
<dbReference type="Gene3D" id="1.10.8.100">
    <property type="entry name" value="Ribosomal RNA adenine dimethylase-like, domain 2"/>
    <property type="match status" value="1"/>
</dbReference>
<dbReference type="Gene3D" id="3.40.50.150">
    <property type="entry name" value="Vaccinia Virus protein VP39"/>
    <property type="match status" value="1"/>
</dbReference>
<dbReference type="HAMAP" id="MF_00607">
    <property type="entry name" value="16SrRNA_methyltr_A"/>
    <property type="match status" value="1"/>
</dbReference>
<dbReference type="InterPro" id="IPR001737">
    <property type="entry name" value="KsgA/Erm"/>
</dbReference>
<dbReference type="InterPro" id="IPR023165">
    <property type="entry name" value="rRNA_Ade_diMease-like_C"/>
</dbReference>
<dbReference type="InterPro" id="IPR020596">
    <property type="entry name" value="rRNA_Ade_Mease_Trfase_CS"/>
</dbReference>
<dbReference type="InterPro" id="IPR020598">
    <property type="entry name" value="rRNA_Ade_methylase_Trfase_N"/>
</dbReference>
<dbReference type="InterPro" id="IPR011530">
    <property type="entry name" value="rRNA_adenine_dimethylase"/>
</dbReference>
<dbReference type="InterPro" id="IPR029063">
    <property type="entry name" value="SAM-dependent_MTases_sf"/>
</dbReference>
<dbReference type="NCBIfam" id="TIGR00755">
    <property type="entry name" value="ksgA"/>
    <property type="match status" value="1"/>
</dbReference>
<dbReference type="PANTHER" id="PTHR11727">
    <property type="entry name" value="DIMETHYLADENOSINE TRANSFERASE"/>
    <property type="match status" value="1"/>
</dbReference>
<dbReference type="PANTHER" id="PTHR11727:SF7">
    <property type="entry name" value="DIMETHYLADENOSINE TRANSFERASE-RELATED"/>
    <property type="match status" value="1"/>
</dbReference>
<dbReference type="Pfam" id="PF00398">
    <property type="entry name" value="RrnaAD"/>
    <property type="match status" value="1"/>
</dbReference>
<dbReference type="SMART" id="SM00650">
    <property type="entry name" value="rADc"/>
    <property type="match status" value="1"/>
</dbReference>
<dbReference type="SUPFAM" id="SSF53335">
    <property type="entry name" value="S-adenosyl-L-methionine-dependent methyltransferases"/>
    <property type="match status" value="1"/>
</dbReference>
<dbReference type="PROSITE" id="PS01131">
    <property type="entry name" value="RRNA_A_DIMETH"/>
    <property type="match status" value="1"/>
</dbReference>
<dbReference type="PROSITE" id="PS51689">
    <property type="entry name" value="SAM_RNA_A_N6_MT"/>
    <property type="match status" value="1"/>
</dbReference>
<feature type="chain" id="PRO_1000130329" description="Ribosomal RNA small subunit methyltransferase A">
    <location>
        <begin position="1"/>
        <end position="273"/>
    </location>
</feature>
<feature type="binding site" evidence="1">
    <location>
        <position position="10"/>
    </location>
    <ligand>
        <name>S-adenosyl-L-methionine</name>
        <dbReference type="ChEBI" id="CHEBI:59789"/>
    </ligand>
</feature>
<feature type="binding site" evidence="1">
    <location>
        <position position="12"/>
    </location>
    <ligand>
        <name>S-adenosyl-L-methionine</name>
        <dbReference type="ChEBI" id="CHEBI:59789"/>
    </ligand>
</feature>
<feature type="binding site" evidence="1">
    <location>
        <position position="37"/>
    </location>
    <ligand>
        <name>S-adenosyl-L-methionine</name>
        <dbReference type="ChEBI" id="CHEBI:59789"/>
    </ligand>
</feature>
<feature type="binding site" evidence="1">
    <location>
        <position position="58"/>
    </location>
    <ligand>
        <name>S-adenosyl-L-methionine</name>
        <dbReference type="ChEBI" id="CHEBI:59789"/>
    </ligand>
</feature>
<feature type="binding site" evidence="1">
    <location>
        <position position="83"/>
    </location>
    <ligand>
        <name>S-adenosyl-L-methionine</name>
        <dbReference type="ChEBI" id="CHEBI:59789"/>
    </ligand>
</feature>
<feature type="binding site" evidence="1">
    <location>
        <position position="108"/>
    </location>
    <ligand>
        <name>S-adenosyl-L-methionine</name>
        <dbReference type="ChEBI" id="CHEBI:59789"/>
    </ligand>
</feature>
<comment type="function">
    <text evidence="1">Specifically dimethylates two adjacent adenosines (A1518 and A1519) in the loop of a conserved hairpin near the 3'-end of 16S rRNA in the 30S particle. May play a critical role in biogenesis of 30S subunits.</text>
</comment>
<comment type="catalytic activity">
    <reaction evidence="1">
        <text>adenosine(1518)/adenosine(1519) in 16S rRNA + 4 S-adenosyl-L-methionine = N(6)-dimethyladenosine(1518)/N(6)-dimethyladenosine(1519) in 16S rRNA + 4 S-adenosyl-L-homocysteine + 4 H(+)</text>
        <dbReference type="Rhea" id="RHEA:19609"/>
        <dbReference type="Rhea" id="RHEA-COMP:10232"/>
        <dbReference type="Rhea" id="RHEA-COMP:10233"/>
        <dbReference type="ChEBI" id="CHEBI:15378"/>
        <dbReference type="ChEBI" id="CHEBI:57856"/>
        <dbReference type="ChEBI" id="CHEBI:59789"/>
        <dbReference type="ChEBI" id="CHEBI:74411"/>
        <dbReference type="ChEBI" id="CHEBI:74493"/>
        <dbReference type="EC" id="2.1.1.182"/>
    </reaction>
</comment>
<comment type="subcellular location">
    <subcellularLocation>
        <location evidence="1">Cytoplasm</location>
    </subcellularLocation>
</comment>
<comment type="similarity">
    <text evidence="1">Belongs to the class I-like SAM-binding methyltransferase superfamily. rRNA adenine N(6)-methyltransferase family. RsmA subfamily.</text>
</comment>
<name>RSMA_PICP2</name>
<accession>B1XIV9</accession>
<gene>
    <name evidence="1" type="primary">rsmA</name>
    <name evidence="1" type="synonym">ksgA</name>
    <name type="ordered locus">SYNPCC7002_A0897</name>
</gene>
<sequence length="273" mass="30892">MRPRKRFGQHWLTDQQILDEIVAAANLQPTDRVLEIGPGKGALTSRLLPQVEALLSVEIDRDLCKYMVKNYGDRPNFLLLEADYLQTDINEFLGDFPQFQNPRKVVANIPYNITGPILEKLLGTIDRPNSNPFESIVLLIQKEVGDRLVAHPCTKAFGALTLRVQYLADCETVCVVPPKAFYPKPKVESVVVRLRPRPLAQPAQNPKLLATLIKVGFASKRKMLRNNLKSLYNPEILDPIFADLDISPQARGEEVDLLQWIALSDRLNDYPKE</sequence>
<protein>
    <recommendedName>
        <fullName evidence="1">Ribosomal RNA small subunit methyltransferase A</fullName>
        <ecNumber evidence="1">2.1.1.182</ecNumber>
    </recommendedName>
    <alternativeName>
        <fullName evidence="1">16S rRNA (adenine(1518)-N(6)/adenine(1519)-N(6))-dimethyltransferase</fullName>
    </alternativeName>
    <alternativeName>
        <fullName evidence="1">16S rRNA dimethyladenosine transferase</fullName>
    </alternativeName>
    <alternativeName>
        <fullName evidence="1">16S rRNA dimethylase</fullName>
    </alternativeName>
    <alternativeName>
        <fullName evidence="1">S-adenosylmethionine-6-N', N'-adenosyl(rRNA) dimethyltransferase</fullName>
    </alternativeName>
</protein>
<evidence type="ECO:0000255" key="1">
    <source>
        <dbReference type="HAMAP-Rule" id="MF_00607"/>
    </source>
</evidence>